<feature type="chain" id="PRO_1000075928" description="2-C-methyl-D-erythritol 4-phosphate cytidylyltransferase">
    <location>
        <begin position="1"/>
        <end position="226"/>
    </location>
</feature>
<feature type="site" description="Transition state stabilizer" evidence="1">
    <location>
        <position position="14"/>
    </location>
</feature>
<feature type="site" description="Transition state stabilizer" evidence="1">
    <location>
        <position position="21"/>
    </location>
</feature>
<feature type="site" description="Positions MEP for the nucleophilic attack" evidence="1">
    <location>
        <position position="151"/>
    </location>
</feature>
<feature type="site" description="Positions MEP for the nucleophilic attack" evidence="1">
    <location>
        <position position="207"/>
    </location>
</feature>
<reference key="1">
    <citation type="journal article" date="2008" name="Chem. Biol. Interact.">
        <title>Extending the Bacillus cereus group genomics to putative food-borne pathogens of different toxicity.</title>
        <authorList>
            <person name="Lapidus A."/>
            <person name="Goltsman E."/>
            <person name="Auger S."/>
            <person name="Galleron N."/>
            <person name="Segurens B."/>
            <person name="Dossat C."/>
            <person name="Land M.L."/>
            <person name="Broussolle V."/>
            <person name="Brillard J."/>
            <person name="Guinebretiere M.-H."/>
            <person name="Sanchis V."/>
            <person name="Nguen-the C."/>
            <person name="Lereclus D."/>
            <person name="Richardson P."/>
            <person name="Wincker P."/>
            <person name="Weissenbach J."/>
            <person name="Ehrlich S.D."/>
            <person name="Sorokin A."/>
        </authorList>
    </citation>
    <scope>NUCLEOTIDE SEQUENCE [LARGE SCALE GENOMIC DNA]</scope>
    <source>
        <strain>DSM 22905 / CIP 110041 / 391-98 / NVH 391-98</strain>
    </source>
</reference>
<protein>
    <recommendedName>
        <fullName evidence="1">2-C-methyl-D-erythritol 4-phosphate cytidylyltransferase</fullName>
        <ecNumber evidence="1">2.7.7.60</ecNumber>
    </recommendedName>
    <alternativeName>
        <fullName evidence="1">4-diphosphocytidyl-2C-methyl-D-erythritol synthase</fullName>
    </alternativeName>
    <alternativeName>
        <fullName evidence="1">MEP cytidylyltransferase</fullName>
        <shortName evidence="1">MCT</shortName>
    </alternativeName>
</protein>
<proteinExistence type="inferred from homology"/>
<comment type="function">
    <text evidence="1">Catalyzes the formation of 4-diphosphocytidyl-2-C-methyl-D-erythritol from CTP and 2-C-methyl-D-erythritol 4-phosphate (MEP).</text>
</comment>
<comment type="catalytic activity">
    <reaction evidence="1">
        <text>2-C-methyl-D-erythritol 4-phosphate + CTP + H(+) = 4-CDP-2-C-methyl-D-erythritol + diphosphate</text>
        <dbReference type="Rhea" id="RHEA:13429"/>
        <dbReference type="ChEBI" id="CHEBI:15378"/>
        <dbReference type="ChEBI" id="CHEBI:33019"/>
        <dbReference type="ChEBI" id="CHEBI:37563"/>
        <dbReference type="ChEBI" id="CHEBI:57823"/>
        <dbReference type="ChEBI" id="CHEBI:58262"/>
        <dbReference type="EC" id="2.7.7.60"/>
    </reaction>
</comment>
<comment type="pathway">
    <text evidence="1">Isoprenoid biosynthesis; isopentenyl diphosphate biosynthesis via DXP pathway; isopentenyl diphosphate from 1-deoxy-D-xylulose 5-phosphate: step 2/6.</text>
</comment>
<comment type="similarity">
    <text evidence="1">Belongs to the IspD/TarI cytidylyltransferase family. IspD subfamily.</text>
</comment>
<dbReference type="EC" id="2.7.7.60" evidence="1"/>
<dbReference type="EMBL" id="CP000764">
    <property type="protein sequence ID" value="ABS20455.1"/>
    <property type="molecule type" value="Genomic_DNA"/>
</dbReference>
<dbReference type="RefSeq" id="WP_011983224.1">
    <property type="nucleotide sequence ID" value="NC_009674.1"/>
</dbReference>
<dbReference type="SMR" id="A7GJZ7"/>
<dbReference type="STRING" id="315749.Bcer98_0080"/>
<dbReference type="GeneID" id="33895401"/>
<dbReference type="KEGG" id="bcy:Bcer98_0080"/>
<dbReference type="eggNOG" id="COG1211">
    <property type="taxonomic scope" value="Bacteria"/>
</dbReference>
<dbReference type="HOGENOM" id="CLU_061281_2_2_9"/>
<dbReference type="OrthoDB" id="9806837at2"/>
<dbReference type="UniPathway" id="UPA00056">
    <property type="reaction ID" value="UER00093"/>
</dbReference>
<dbReference type="Proteomes" id="UP000002300">
    <property type="component" value="Chromosome"/>
</dbReference>
<dbReference type="GO" id="GO:0050518">
    <property type="term" value="F:2-C-methyl-D-erythritol 4-phosphate cytidylyltransferase activity"/>
    <property type="evidence" value="ECO:0007669"/>
    <property type="project" value="UniProtKB-UniRule"/>
</dbReference>
<dbReference type="GO" id="GO:0019288">
    <property type="term" value="P:isopentenyl diphosphate biosynthetic process, methylerythritol 4-phosphate pathway"/>
    <property type="evidence" value="ECO:0007669"/>
    <property type="project" value="UniProtKB-UniRule"/>
</dbReference>
<dbReference type="CDD" id="cd02516">
    <property type="entry name" value="CDP-ME_synthetase"/>
    <property type="match status" value="1"/>
</dbReference>
<dbReference type="FunFam" id="3.90.550.10:FF:000003">
    <property type="entry name" value="2-C-methyl-D-erythritol 4-phosphate cytidylyltransferase"/>
    <property type="match status" value="1"/>
</dbReference>
<dbReference type="Gene3D" id="3.90.550.10">
    <property type="entry name" value="Spore Coat Polysaccharide Biosynthesis Protein SpsA, Chain A"/>
    <property type="match status" value="1"/>
</dbReference>
<dbReference type="HAMAP" id="MF_00108">
    <property type="entry name" value="IspD"/>
    <property type="match status" value="1"/>
</dbReference>
<dbReference type="InterPro" id="IPR001228">
    <property type="entry name" value="IspD"/>
</dbReference>
<dbReference type="InterPro" id="IPR034683">
    <property type="entry name" value="IspD/TarI"/>
</dbReference>
<dbReference type="InterPro" id="IPR050088">
    <property type="entry name" value="IspD/TarI_cytidylyltransf_bact"/>
</dbReference>
<dbReference type="InterPro" id="IPR018294">
    <property type="entry name" value="ISPD_synthase_CS"/>
</dbReference>
<dbReference type="InterPro" id="IPR029044">
    <property type="entry name" value="Nucleotide-diphossugar_trans"/>
</dbReference>
<dbReference type="NCBIfam" id="TIGR00453">
    <property type="entry name" value="ispD"/>
    <property type="match status" value="1"/>
</dbReference>
<dbReference type="PANTHER" id="PTHR32125">
    <property type="entry name" value="2-C-METHYL-D-ERYTHRITOL 4-PHOSPHATE CYTIDYLYLTRANSFERASE, CHLOROPLASTIC"/>
    <property type="match status" value="1"/>
</dbReference>
<dbReference type="PANTHER" id="PTHR32125:SF4">
    <property type="entry name" value="2-C-METHYL-D-ERYTHRITOL 4-PHOSPHATE CYTIDYLYLTRANSFERASE, CHLOROPLASTIC"/>
    <property type="match status" value="1"/>
</dbReference>
<dbReference type="Pfam" id="PF01128">
    <property type="entry name" value="IspD"/>
    <property type="match status" value="1"/>
</dbReference>
<dbReference type="SUPFAM" id="SSF53448">
    <property type="entry name" value="Nucleotide-diphospho-sugar transferases"/>
    <property type="match status" value="1"/>
</dbReference>
<dbReference type="PROSITE" id="PS01295">
    <property type="entry name" value="ISPD"/>
    <property type="match status" value="1"/>
</dbReference>
<keyword id="KW-0414">Isoprene biosynthesis</keyword>
<keyword id="KW-0548">Nucleotidyltransferase</keyword>
<keyword id="KW-0808">Transferase</keyword>
<sequence length="226" mass="25213">MYTLIIPAAGQGKRMGAGKNKLFLLINEVPIIVHTLRAFEKDEACEKIIMAINEQERSDFEALIQKYGIRKNVQFIQGGAERQDSVYHALQYVKETEYVLVHDGARPFVTNKMIHEVLIVAKEKGASICAVPVKDTIKKVVNDAVFETVERSQLRAVQTPQGFSVALLLEAHQSAKQSGFLGTDDASLVERIGKEVGVVEGSYYNIKVTTPEDLLIAESFLHVQRR</sequence>
<gene>
    <name evidence="1" type="primary">ispD</name>
    <name type="ordered locus">Bcer98_0080</name>
</gene>
<evidence type="ECO:0000255" key="1">
    <source>
        <dbReference type="HAMAP-Rule" id="MF_00108"/>
    </source>
</evidence>
<accession>A7GJZ7</accession>
<organism>
    <name type="scientific">Bacillus cytotoxicus (strain DSM 22905 / CIP 110041 / 391-98 / NVH 391-98)</name>
    <dbReference type="NCBI Taxonomy" id="315749"/>
    <lineage>
        <taxon>Bacteria</taxon>
        <taxon>Bacillati</taxon>
        <taxon>Bacillota</taxon>
        <taxon>Bacilli</taxon>
        <taxon>Bacillales</taxon>
        <taxon>Bacillaceae</taxon>
        <taxon>Bacillus</taxon>
        <taxon>Bacillus cereus group</taxon>
    </lineage>
</organism>
<name>ISPD_BACCN</name>